<gene>
    <name evidence="1" type="primary">hslO</name>
    <name type="ordered locus">ECIAI39_3879</name>
</gene>
<protein>
    <recommendedName>
        <fullName evidence="1">33 kDa chaperonin</fullName>
    </recommendedName>
    <alternativeName>
        <fullName evidence="1">Heat shock protein 33 homolog</fullName>
        <shortName evidence="1">HSP33</shortName>
    </alternativeName>
</protein>
<reference key="1">
    <citation type="journal article" date="2009" name="PLoS Genet.">
        <title>Organised genome dynamics in the Escherichia coli species results in highly diverse adaptive paths.</title>
        <authorList>
            <person name="Touchon M."/>
            <person name="Hoede C."/>
            <person name="Tenaillon O."/>
            <person name="Barbe V."/>
            <person name="Baeriswyl S."/>
            <person name="Bidet P."/>
            <person name="Bingen E."/>
            <person name="Bonacorsi S."/>
            <person name="Bouchier C."/>
            <person name="Bouvet O."/>
            <person name="Calteau A."/>
            <person name="Chiapello H."/>
            <person name="Clermont O."/>
            <person name="Cruveiller S."/>
            <person name="Danchin A."/>
            <person name="Diard M."/>
            <person name="Dossat C."/>
            <person name="Karoui M.E."/>
            <person name="Frapy E."/>
            <person name="Garry L."/>
            <person name="Ghigo J.M."/>
            <person name="Gilles A.M."/>
            <person name="Johnson J."/>
            <person name="Le Bouguenec C."/>
            <person name="Lescat M."/>
            <person name="Mangenot S."/>
            <person name="Martinez-Jehanne V."/>
            <person name="Matic I."/>
            <person name="Nassif X."/>
            <person name="Oztas S."/>
            <person name="Petit M.A."/>
            <person name="Pichon C."/>
            <person name="Rouy Z."/>
            <person name="Ruf C.S."/>
            <person name="Schneider D."/>
            <person name="Tourret J."/>
            <person name="Vacherie B."/>
            <person name="Vallenet D."/>
            <person name="Medigue C."/>
            <person name="Rocha E.P.C."/>
            <person name="Denamur E."/>
        </authorList>
    </citation>
    <scope>NUCLEOTIDE SEQUENCE [LARGE SCALE GENOMIC DNA]</scope>
    <source>
        <strain>IAI39 / ExPEC</strain>
    </source>
</reference>
<evidence type="ECO:0000255" key="1">
    <source>
        <dbReference type="HAMAP-Rule" id="MF_00117"/>
    </source>
</evidence>
<proteinExistence type="inferred from homology"/>
<organism>
    <name type="scientific">Escherichia coli O7:K1 (strain IAI39 / ExPEC)</name>
    <dbReference type="NCBI Taxonomy" id="585057"/>
    <lineage>
        <taxon>Bacteria</taxon>
        <taxon>Pseudomonadati</taxon>
        <taxon>Pseudomonadota</taxon>
        <taxon>Gammaproteobacteria</taxon>
        <taxon>Enterobacterales</taxon>
        <taxon>Enterobacteriaceae</taxon>
        <taxon>Escherichia</taxon>
    </lineage>
</organism>
<name>HSLO_ECO7I</name>
<sequence length="292" mass="32507">MPQHDQLHRYLFENFAVRGELVTVSETLQQILENHDYPQPVKNVLAELLVATSLLTATLKFDGDITVQLQGDGPMSLAVINGNNNQQMRGVARVQGEIPENADLKTLVGNGYVVITITPSEGERYQGVVGLEGDTLAACLEDYFMRSEQLPTRLFIRTGDVDGKPAAGGMLLQVMPAQNAQQDDFDHLATLTETIKTEELLTLPANEVLWRLYHEEEVTVYDPQDVEFKCTCSRERCADALKTLPDEEVDSILAEDGEIDMHCDYCGNHYLFNAMDIAEIRNNASPADPQVH</sequence>
<accession>B7NMG4</accession>
<keyword id="KW-0143">Chaperone</keyword>
<keyword id="KW-0963">Cytoplasm</keyword>
<keyword id="KW-1015">Disulfide bond</keyword>
<keyword id="KW-0676">Redox-active center</keyword>
<keyword id="KW-0346">Stress response</keyword>
<keyword id="KW-0862">Zinc</keyword>
<feature type="chain" id="PRO_1000190461" description="33 kDa chaperonin">
    <location>
        <begin position="1"/>
        <end position="292"/>
    </location>
</feature>
<feature type="disulfide bond" description="Redox-active" evidence="1">
    <location>
        <begin position="230"/>
        <end position="232"/>
    </location>
</feature>
<feature type="disulfide bond" description="Redox-active" evidence="1">
    <location>
        <begin position="263"/>
        <end position="266"/>
    </location>
</feature>
<comment type="function">
    <text evidence="1">Redox regulated molecular chaperone. Protects both thermally unfolding and oxidatively damaged proteins from irreversible aggregation. Plays an important role in the bacterial defense system toward oxidative stress.</text>
</comment>
<comment type="subcellular location">
    <subcellularLocation>
        <location evidence="1">Cytoplasm</location>
    </subcellularLocation>
</comment>
<comment type="PTM">
    <text evidence="1">Under oxidizing conditions two disulfide bonds are formed involving the reactive cysteines. Under reducing conditions zinc is bound to the reactive cysteines and the protein is inactive.</text>
</comment>
<comment type="similarity">
    <text evidence="1">Belongs to the HSP33 family.</text>
</comment>
<dbReference type="EMBL" id="CU928164">
    <property type="protein sequence ID" value="CAR19992.1"/>
    <property type="molecule type" value="Genomic_DNA"/>
</dbReference>
<dbReference type="RefSeq" id="WP_001753131.1">
    <property type="nucleotide sequence ID" value="NC_011750.1"/>
</dbReference>
<dbReference type="RefSeq" id="YP_002409773.1">
    <property type="nucleotide sequence ID" value="NC_011750.1"/>
</dbReference>
<dbReference type="SMR" id="B7NMG4"/>
<dbReference type="STRING" id="585057.ECIAI39_3879"/>
<dbReference type="KEGG" id="ect:ECIAI39_3879"/>
<dbReference type="PATRIC" id="fig|585057.6.peg.4016"/>
<dbReference type="HOGENOM" id="CLU_054493_0_0_6"/>
<dbReference type="Proteomes" id="UP000000749">
    <property type="component" value="Chromosome"/>
</dbReference>
<dbReference type="GO" id="GO:0005737">
    <property type="term" value="C:cytoplasm"/>
    <property type="evidence" value="ECO:0007669"/>
    <property type="project" value="UniProtKB-SubCell"/>
</dbReference>
<dbReference type="GO" id="GO:0044183">
    <property type="term" value="F:protein folding chaperone"/>
    <property type="evidence" value="ECO:0007669"/>
    <property type="project" value="TreeGrafter"/>
</dbReference>
<dbReference type="GO" id="GO:0051082">
    <property type="term" value="F:unfolded protein binding"/>
    <property type="evidence" value="ECO:0007669"/>
    <property type="project" value="UniProtKB-UniRule"/>
</dbReference>
<dbReference type="GO" id="GO:0042026">
    <property type="term" value="P:protein refolding"/>
    <property type="evidence" value="ECO:0007669"/>
    <property type="project" value="TreeGrafter"/>
</dbReference>
<dbReference type="CDD" id="cd00498">
    <property type="entry name" value="Hsp33"/>
    <property type="match status" value="1"/>
</dbReference>
<dbReference type="FunFam" id="3.55.30.10:FF:000001">
    <property type="entry name" value="33 kDa chaperonin"/>
    <property type="match status" value="1"/>
</dbReference>
<dbReference type="Gene3D" id="1.10.287.480">
    <property type="entry name" value="helix hairpin bin"/>
    <property type="match status" value="1"/>
</dbReference>
<dbReference type="Gene3D" id="3.55.30.10">
    <property type="entry name" value="Hsp33 domain"/>
    <property type="match status" value="1"/>
</dbReference>
<dbReference type="Gene3D" id="3.90.1280.10">
    <property type="entry name" value="HSP33 redox switch-like"/>
    <property type="match status" value="1"/>
</dbReference>
<dbReference type="HAMAP" id="MF_00117">
    <property type="entry name" value="HslO"/>
    <property type="match status" value="1"/>
</dbReference>
<dbReference type="InterPro" id="IPR000397">
    <property type="entry name" value="Heat_shock_Hsp33"/>
</dbReference>
<dbReference type="InterPro" id="IPR016154">
    <property type="entry name" value="Heat_shock_Hsp33_C"/>
</dbReference>
<dbReference type="InterPro" id="IPR016153">
    <property type="entry name" value="Heat_shock_Hsp33_N"/>
</dbReference>
<dbReference type="InterPro" id="IPR023212">
    <property type="entry name" value="Hsp33_helix_hairpin_bin_dom_sf"/>
</dbReference>
<dbReference type="NCBIfam" id="NF001033">
    <property type="entry name" value="PRK00114.1"/>
    <property type="match status" value="1"/>
</dbReference>
<dbReference type="PANTHER" id="PTHR30111">
    <property type="entry name" value="33 KDA CHAPERONIN"/>
    <property type="match status" value="1"/>
</dbReference>
<dbReference type="PANTHER" id="PTHR30111:SF1">
    <property type="entry name" value="33 KDA CHAPERONIN"/>
    <property type="match status" value="1"/>
</dbReference>
<dbReference type="Pfam" id="PF01430">
    <property type="entry name" value="HSP33"/>
    <property type="match status" value="1"/>
</dbReference>
<dbReference type="PIRSF" id="PIRSF005261">
    <property type="entry name" value="Heat_shock_Hsp33"/>
    <property type="match status" value="1"/>
</dbReference>
<dbReference type="SUPFAM" id="SSF64397">
    <property type="entry name" value="Hsp33 domain"/>
    <property type="match status" value="1"/>
</dbReference>
<dbReference type="SUPFAM" id="SSF118352">
    <property type="entry name" value="HSP33 redox switch-like"/>
    <property type="match status" value="1"/>
</dbReference>